<organism>
    <name type="scientific">Moorella thermoacetica (strain ATCC 39073 / JCM 9320)</name>
    <dbReference type="NCBI Taxonomy" id="264732"/>
    <lineage>
        <taxon>Bacteria</taxon>
        <taxon>Bacillati</taxon>
        <taxon>Bacillota</taxon>
        <taxon>Clostridia</taxon>
        <taxon>Moorellales</taxon>
        <taxon>Moorellaceae</taxon>
        <taxon>Moorella</taxon>
    </lineage>
</organism>
<proteinExistence type="inferred from homology"/>
<name>RS9_MOOTA</name>
<reference key="1">
    <citation type="journal article" date="2008" name="Environ. Microbiol.">
        <title>The complete genome sequence of Moorella thermoacetica (f. Clostridium thermoaceticum).</title>
        <authorList>
            <person name="Pierce E."/>
            <person name="Xie G."/>
            <person name="Barabote R.D."/>
            <person name="Saunders E."/>
            <person name="Han C.S."/>
            <person name="Detter J.C."/>
            <person name="Richardson P."/>
            <person name="Brettin T.S."/>
            <person name="Das A."/>
            <person name="Ljungdahl L.G."/>
            <person name="Ragsdale S.W."/>
        </authorList>
    </citation>
    <scope>NUCLEOTIDE SEQUENCE [LARGE SCALE GENOMIC DNA]</scope>
    <source>
        <strain>ATCC 39073 / JCM 9320</strain>
    </source>
</reference>
<protein>
    <recommendedName>
        <fullName evidence="1">Small ribosomal subunit protein uS9</fullName>
    </recommendedName>
    <alternativeName>
        <fullName evidence="3">30S ribosomal protein S9</fullName>
    </alternativeName>
</protein>
<feature type="chain" id="PRO_1000051254" description="Small ribosomal subunit protein uS9">
    <location>
        <begin position="1"/>
        <end position="130"/>
    </location>
</feature>
<feature type="region of interest" description="Disordered" evidence="2">
    <location>
        <begin position="104"/>
        <end position="130"/>
    </location>
</feature>
<feature type="compositionally biased region" description="Basic residues" evidence="2">
    <location>
        <begin position="111"/>
        <end position="130"/>
    </location>
</feature>
<accession>Q2RFT3</accession>
<comment type="similarity">
    <text evidence="1">Belongs to the universal ribosomal protein uS9 family.</text>
</comment>
<evidence type="ECO:0000255" key="1">
    <source>
        <dbReference type="HAMAP-Rule" id="MF_00532"/>
    </source>
</evidence>
<evidence type="ECO:0000256" key="2">
    <source>
        <dbReference type="SAM" id="MobiDB-lite"/>
    </source>
</evidence>
<evidence type="ECO:0000305" key="3"/>
<gene>
    <name evidence="1" type="primary">rpsI</name>
    <name type="ordered locus">Moth_2424</name>
</gene>
<dbReference type="EMBL" id="CP000232">
    <property type="protein sequence ID" value="ABC20706.1"/>
    <property type="molecule type" value="Genomic_DNA"/>
</dbReference>
<dbReference type="RefSeq" id="YP_431249.1">
    <property type="nucleotide sequence ID" value="NC_007644.1"/>
</dbReference>
<dbReference type="SMR" id="Q2RFT3"/>
<dbReference type="STRING" id="264732.Moth_2424"/>
<dbReference type="EnsemblBacteria" id="ABC20706">
    <property type="protein sequence ID" value="ABC20706"/>
    <property type="gene ID" value="Moth_2424"/>
</dbReference>
<dbReference type="KEGG" id="mta:Moth_2424"/>
<dbReference type="PATRIC" id="fig|264732.11.peg.2642"/>
<dbReference type="eggNOG" id="COG0103">
    <property type="taxonomic scope" value="Bacteria"/>
</dbReference>
<dbReference type="HOGENOM" id="CLU_046483_2_1_9"/>
<dbReference type="OrthoDB" id="9803965at2"/>
<dbReference type="GO" id="GO:0022627">
    <property type="term" value="C:cytosolic small ribosomal subunit"/>
    <property type="evidence" value="ECO:0007669"/>
    <property type="project" value="TreeGrafter"/>
</dbReference>
<dbReference type="GO" id="GO:0003723">
    <property type="term" value="F:RNA binding"/>
    <property type="evidence" value="ECO:0007669"/>
    <property type="project" value="TreeGrafter"/>
</dbReference>
<dbReference type="GO" id="GO:0003735">
    <property type="term" value="F:structural constituent of ribosome"/>
    <property type="evidence" value="ECO:0007669"/>
    <property type="project" value="InterPro"/>
</dbReference>
<dbReference type="GO" id="GO:0006412">
    <property type="term" value="P:translation"/>
    <property type="evidence" value="ECO:0007669"/>
    <property type="project" value="UniProtKB-UniRule"/>
</dbReference>
<dbReference type="FunFam" id="3.30.230.10:FF:000001">
    <property type="entry name" value="30S ribosomal protein S9"/>
    <property type="match status" value="1"/>
</dbReference>
<dbReference type="Gene3D" id="3.30.230.10">
    <property type="match status" value="1"/>
</dbReference>
<dbReference type="HAMAP" id="MF_00532_B">
    <property type="entry name" value="Ribosomal_uS9_B"/>
    <property type="match status" value="1"/>
</dbReference>
<dbReference type="InterPro" id="IPR020568">
    <property type="entry name" value="Ribosomal_Su5_D2-typ_SF"/>
</dbReference>
<dbReference type="InterPro" id="IPR000754">
    <property type="entry name" value="Ribosomal_uS9"/>
</dbReference>
<dbReference type="InterPro" id="IPR023035">
    <property type="entry name" value="Ribosomal_uS9_bac/plastid"/>
</dbReference>
<dbReference type="InterPro" id="IPR020574">
    <property type="entry name" value="Ribosomal_uS9_CS"/>
</dbReference>
<dbReference type="InterPro" id="IPR014721">
    <property type="entry name" value="Ribsml_uS5_D2-typ_fold_subgr"/>
</dbReference>
<dbReference type="NCBIfam" id="NF001099">
    <property type="entry name" value="PRK00132.1"/>
    <property type="match status" value="1"/>
</dbReference>
<dbReference type="PANTHER" id="PTHR21569">
    <property type="entry name" value="RIBOSOMAL PROTEIN S9"/>
    <property type="match status" value="1"/>
</dbReference>
<dbReference type="PANTHER" id="PTHR21569:SF1">
    <property type="entry name" value="SMALL RIBOSOMAL SUBUNIT PROTEIN US9M"/>
    <property type="match status" value="1"/>
</dbReference>
<dbReference type="Pfam" id="PF00380">
    <property type="entry name" value="Ribosomal_S9"/>
    <property type="match status" value="1"/>
</dbReference>
<dbReference type="SUPFAM" id="SSF54211">
    <property type="entry name" value="Ribosomal protein S5 domain 2-like"/>
    <property type="match status" value="1"/>
</dbReference>
<dbReference type="PROSITE" id="PS00360">
    <property type="entry name" value="RIBOSOMAL_S9"/>
    <property type="match status" value="1"/>
</dbReference>
<sequence>MAQVQFYGTGRRKNAIARVRLVPGEGRIIVNNRPLNEYFGQKILEMLVRQPLEVTDMAGRFDVLARVEGGGTTGQAGAIRLGIARALLQADGDLRPVLKRNGFLTRDPRMKERRKYGLKKARKAPQFSKR</sequence>
<keyword id="KW-0687">Ribonucleoprotein</keyword>
<keyword id="KW-0689">Ribosomal protein</keyword>